<gene>
    <name type="ORF">ORF32</name>
</gene>
<reference key="1">
    <citation type="journal article" date="2006" name="Virology">
        <title>His1 and His2 are distantly related, spindle-shaped haloviruses belonging to the novel virus group, Salterprovirus.</title>
        <authorList>
            <person name="Bath C."/>
            <person name="Cukalac T."/>
            <person name="Porter K."/>
            <person name="Dyall-Smith M.L."/>
        </authorList>
    </citation>
    <scope>NUCLEOTIDE SEQUENCE [GENOMIC DNA]</scope>
</reference>
<feature type="chain" id="PRO_0000384899" description="Putative transmembrane protein ORF32">
    <location>
        <begin position="1"/>
        <end position="143"/>
    </location>
</feature>
<feature type="transmembrane region" description="Helical" evidence="1">
    <location>
        <begin position="20"/>
        <end position="42"/>
    </location>
</feature>
<feature type="transmembrane region" description="Helical" evidence="1">
    <location>
        <begin position="52"/>
        <end position="74"/>
    </location>
</feature>
<name>Y032_HIS1I</name>
<organismHost>
    <name type="scientific">Haloarcula hispanica</name>
    <dbReference type="NCBI Taxonomy" id="51589"/>
</organismHost>
<sequence>MTADRQWVKIIARWLARIDGISGMLRLAMLGLTGVSTMSFTLKDYGLERLVWPLIGAMCVGTLLFAYYYTEGGVWNQVHRDKRDMSQNYATPFQKISNEMTARGLYAGEKGSELSQEERQAIQKEIDMAYMELRDGIEVEKDD</sequence>
<comment type="subcellular location">
    <subcellularLocation>
        <location evidence="2">Host membrane</location>
        <topology evidence="2">Multi-pass membrane protein</topology>
    </subcellularLocation>
</comment>
<keyword id="KW-1043">Host membrane</keyword>
<keyword id="KW-0472">Membrane</keyword>
<keyword id="KW-1185">Reference proteome</keyword>
<keyword id="KW-0812">Transmembrane</keyword>
<keyword id="KW-1133">Transmembrane helix</keyword>
<accession>Q25BG3</accession>
<proteinExistence type="predicted"/>
<organism>
    <name type="scientific">His1 virus (isolate Australia/Victoria)</name>
    <name type="common">His1V</name>
    <name type="synonym">Haloarcula hispanica virus 1</name>
    <dbReference type="NCBI Taxonomy" id="654912"/>
    <lineage>
        <taxon>Viruses</taxon>
        <taxon>Viruses incertae sedis</taxon>
        <taxon>Halspiviridae</taxon>
        <taxon>Salterprovirus</taxon>
        <taxon>Salterprovirus His1</taxon>
    </lineage>
</organism>
<dbReference type="EMBL" id="AF191796">
    <property type="protein sequence ID" value="AAQ13759.1"/>
    <property type="molecule type" value="Genomic_DNA"/>
</dbReference>
<dbReference type="RefSeq" id="YP_529544.1">
    <property type="nucleotide sequence ID" value="NC_007914.1"/>
</dbReference>
<dbReference type="SMR" id="Q25BG3"/>
<dbReference type="KEGG" id="vg:5142395"/>
<dbReference type="Proteomes" id="UP000007024">
    <property type="component" value="Segment"/>
</dbReference>
<dbReference type="GO" id="GO:0033644">
    <property type="term" value="C:host cell membrane"/>
    <property type="evidence" value="ECO:0007669"/>
    <property type="project" value="UniProtKB-SubCell"/>
</dbReference>
<dbReference type="GO" id="GO:0016020">
    <property type="term" value="C:membrane"/>
    <property type="evidence" value="ECO:0007669"/>
    <property type="project" value="UniProtKB-KW"/>
</dbReference>
<protein>
    <recommendedName>
        <fullName>Putative transmembrane protein ORF32</fullName>
    </recommendedName>
</protein>
<evidence type="ECO:0000255" key="1"/>
<evidence type="ECO:0000305" key="2"/>